<gene>
    <name evidence="3" type="primary">EIF3C</name>
    <name evidence="3" type="synonym">EIF3S8</name>
</gene>
<name>EIF3C_BOVIN</name>
<sequence length="912" mass="105366">MSRFFTTGSDSESESSLSGEELVTKPVGGNYGKQPLLLSEDEEDTKRVVRSAKDKRFEELTNLIRTIRNAMKIRDVTKCLEEFELLGKAYGKAKSIVDKEGVPRFYIRILADLEDYLNELWEDKEGKKKMNKNNAKALSTLRQKIRKYNRDFESHITNYKQNPEQSADEDAEKNEEDSEGSSDEDEDDDGVTAAAFLKKKSEAPSGDSRKFLKKEDEDEDSEESEDSEAWDTSSTSSDSDSEEEEGKQTVLASRFLKKAPTTEEDKKAAEKKREDKAKKKHDRKSRRPDEEEEDNEGGEWERVRGGVPLVKEKPKMFAKGTEITHAVVIKKLNEILQARGKKGTDRAAQIELLQLLVQIASENNLGEGVIVKIKFNIIASLYDYNPNLATYMKPEMWQKCLDCINELMDILFANPNIFVGENILEESENLHNADQPLRVRGCILTLVERMDEEFTKIMQNTDPHSQEYVEHLKDEAQVCAIIERVQRYLEEKGTTEEVCRIYLRRILHTYYKFDYKAHQRQLTPPEGSSKSEQDQAENEGEDSAVLMERLCKYIYAKDRTDRIRTCAILCHIYHHALHSRWYQARDLMLMSHLQDNIQHADPPVQILYNRTMVQLGICAFRQGLTKDAHNALLDIQSSGRAKELLGQGLLLRSLQERNQEQEKVERRRQVPFHLHINLELLECVYLVSAMLLEIPYMAAHESDARRRMISKQFHHQLRVGERQPLLGPPESMREHVVAASKAMKMGDWKTCHSFIINEKMNGKVWDLFPEADKVRTMLVRKIQEESLRTYLFTYSSVYDSISMETLSDMFELDLPTVHSIISKMIINEELMASLDQPTQTVVMHRTEPTAQQNLALQLAEKLGSLVENNERVFDHKQGTYGGYFRDQKDGYRKNEGYMRRGGYRQQQSQTAY</sequence>
<comment type="function">
    <text evidence="3">Component of the eukaryotic translation initiation factor 3 (eIF-3) complex, which is required for several steps in the initiation of protein synthesis. The eIF-3 complex associates with the 40S ribosome and facilitates the recruitment of eIF-1, eIF-1A, eIF-2:GTP:methionyl-tRNAi and eIF-5 to form the 43S pre-initiation complex (43S PIC). The eIF-3 complex stimulates mRNA recruitment to the 43S PIC and scanning of the mRNA for AUG recognition. The eIF-3 complex is also required for disassembly and recycling of post-termination ribosomal complexes and subsequently prevents premature joining of the 40S and 60S ribosomal subunits prior to initiation. The eIF-3 complex specifically targets and initiates translation of a subset of mRNAs involved in cell proliferation, including cell cycling, differentiation and apoptosis, and uses different modes of RNA stem-loop binding to exert either translational activation or repression.</text>
</comment>
<comment type="subunit">
    <text evidence="2 3">Component of the eukaryotic translation initiation factor 3 (eIF-3) complex, which is composed of 13 subunits: EIF3A, EIF3B, EIF3C, EIF3D, EIF3E, EIF3F, EIF3G, EIF3H, EIF3I, EIF3J, EIF3K, EIF3L and EIF3M. The eIF-3 complex appears to include 3 stable modules: module A is composed of EIF3A, EIF3B, EIF3G and EIF3I; module B is composed of EIF3F, EIF3H, and EIF3M; and module C is composed of EIF3C, EIF3D, EIF3E, EIF3K and EIF3L. EIF3C of module C binds EIF3B of module A and EIF3H of module B, thereby linking the three modules. EIF3J is a labile subunit that binds to the eIF-3 complex via EIF3B. The eIF-3 complex interacts with RPS6KB1 under conditions of nutrient depletion. Mitogenic stimulation leads to binding and activation of a complex composed of MTOR and RPTOR, leading to phosphorylation and release of RPS6KB1 and binding of EIF4B to eIF-3. Identified in a HCV IRES-mediated translation complex, at least composed of EIF3C, IGF2BP1, RPS3 and HCV RNA-replicon. Interacts with ALKBH4, IFIT1 and IFIT2 (By similarity). Interacts with BZW2/5MP1 (By similarity).</text>
</comment>
<comment type="subcellular location">
    <subcellularLocation>
        <location evidence="3">Cytoplasm</location>
    </subcellularLocation>
</comment>
<comment type="PTM">
    <text evidence="3">Phosphorylated. Phosphorylation is enhanced upon serum stimulation.</text>
</comment>
<comment type="similarity">
    <text evidence="3">Belongs to the eIF-3 subunit C family.</text>
</comment>
<keyword id="KW-0007">Acetylation</keyword>
<keyword id="KW-0963">Cytoplasm</keyword>
<keyword id="KW-0396">Initiation factor</keyword>
<keyword id="KW-0597">Phosphoprotein</keyword>
<keyword id="KW-0648">Protein biosynthesis</keyword>
<keyword id="KW-1185">Reference proteome</keyword>
<accession>Q3SYW6</accession>
<feature type="chain" id="PRO_0000259423" description="Eukaryotic translation initiation factor 3 subunit C">
    <location>
        <begin position="1"/>
        <end position="912"/>
    </location>
</feature>
<feature type="domain" description="PCI" evidence="4">
    <location>
        <begin position="672"/>
        <end position="848"/>
    </location>
</feature>
<feature type="region of interest" description="Disordered" evidence="5">
    <location>
        <begin position="1"/>
        <end position="44"/>
    </location>
</feature>
<feature type="region of interest" description="Disordered" evidence="5">
    <location>
        <begin position="157"/>
        <end position="305"/>
    </location>
</feature>
<feature type="region of interest" description="Disordered" evidence="5">
    <location>
        <begin position="521"/>
        <end position="541"/>
    </location>
</feature>
<feature type="region of interest" description="Disordered" evidence="5">
    <location>
        <begin position="884"/>
        <end position="912"/>
    </location>
</feature>
<feature type="compositionally biased region" description="Low complexity" evidence="5">
    <location>
        <begin position="8"/>
        <end position="21"/>
    </location>
</feature>
<feature type="compositionally biased region" description="Acidic residues" evidence="5">
    <location>
        <begin position="166"/>
        <end position="190"/>
    </location>
</feature>
<feature type="compositionally biased region" description="Basic and acidic residues" evidence="5">
    <location>
        <begin position="199"/>
        <end position="215"/>
    </location>
</feature>
<feature type="compositionally biased region" description="Acidic residues" evidence="5">
    <location>
        <begin position="216"/>
        <end position="229"/>
    </location>
</feature>
<feature type="compositionally biased region" description="Basic and acidic residues" evidence="5">
    <location>
        <begin position="260"/>
        <end position="277"/>
    </location>
</feature>
<feature type="compositionally biased region" description="Polar residues" evidence="5">
    <location>
        <begin position="521"/>
        <end position="530"/>
    </location>
</feature>
<feature type="compositionally biased region" description="Basic and acidic residues" evidence="5">
    <location>
        <begin position="885"/>
        <end position="898"/>
    </location>
</feature>
<feature type="modified residue" description="Phosphoserine" evidence="2 3">
    <location>
        <position position="9"/>
    </location>
</feature>
<feature type="modified residue" description="Phosphoserine" evidence="2 3">
    <location>
        <position position="11"/>
    </location>
</feature>
<feature type="modified residue" description="Phosphoserine" evidence="2 3">
    <location>
        <position position="13"/>
    </location>
</feature>
<feature type="modified residue" description="Phosphoserine" evidence="2 3">
    <location>
        <position position="15"/>
    </location>
</feature>
<feature type="modified residue" description="Phosphoserine" evidence="2 3">
    <location>
        <position position="16"/>
    </location>
</feature>
<feature type="modified residue" description="Phosphoserine" evidence="2 3">
    <location>
        <position position="18"/>
    </location>
</feature>
<feature type="modified residue" description="Phosphoserine" evidence="2 3">
    <location>
        <position position="39"/>
    </location>
</feature>
<feature type="modified residue" description="N6-acetyllysine" evidence="1">
    <location>
        <position position="99"/>
    </location>
</feature>
<feature type="modified residue" description="Phosphoserine" evidence="2 3">
    <location>
        <position position="166"/>
    </location>
</feature>
<feature type="modified residue" description="Phosphoserine" evidence="1">
    <location>
        <position position="178"/>
    </location>
</feature>
<feature type="modified residue" description="Phosphoserine" evidence="1">
    <location>
        <position position="181"/>
    </location>
</feature>
<feature type="modified residue" description="Phosphoserine" evidence="1">
    <location>
        <position position="182"/>
    </location>
</feature>
<feature type="modified residue" description="Phosphothreonine" evidence="2 3">
    <location>
        <position position="523"/>
    </location>
</feature>
<feature type="modified residue" description="N6-acetyllysine" evidence="1">
    <location>
        <position position="642"/>
    </location>
</feature>
<feature type="modified residue" description="Phosphoserine" evidence="2 3">
    <location>
        <position position="908"/>
    </location>
</feature>
<reference key="1">
    <citation type="submission" date="2005-08" db="EMBL/GenBank/DDBJ databases">
        <authorList>
            <consortium name="NIH - Mammalian Gene Collection (MGC) project"/>
        </authorList>
    </citation>
    <scope>NUCLEOTIDE SEQUENCE [LARGE SCALE MRNA]</scope>
    <source>
        <strain>Crossbred X Angus</strain>
        <tissue>Ileum</tissue>
    </source>
</reference>
<dbReference type="EMBL" id="BC103352">
    <property type="protein sequence ID" value="AAI03353.1"/>
    <property type="molecule type" value="mRNA"/>
</dbReference>
<dbReference type="RefSeq" id="NP_001029790.1">
    <property type="nucleotide sequence ID" value="NM_001034618.2"/>
</dbReference>
<dbReference type="RefSeq" id="XP_005224985.1">
    <property type="nucleotide sequence ID" value="XM_005224928.1"/>
</dbReference>
<dbReference type="SMR" id="Q3SYW6"/>
<dbReference type="FunCoup" id="Q3SYW6">
    <property type="interactions" value="3900"/>
</dbReference>
<dbReference type="STRING" id="9913.ENSBTAP00000023384"/>
<dbReference type="PaxDb" id="9913-ENSBTAP00000023384"/>
<dbReference type="PeptideAtlas" id="Q3SYW6"/>
<dbReference type="Ensembl" id="ENSBTAT00000023384.4">
    <property type="protein sequence ID" value="ENSBTAP00000023384.3"/>
    <property type="gene ID" value="ENSBTAG00000006543.5"/>
</dbReference>
<dbReference type="GeneID" id="534882"/>
<dbReference type="KEGG" id="bta:534882"/>
<dbReference type="CTD" id="728689"/>
<dbReference type="VEuPathDB" id="HostDB:ENSBTAG00000006543"/>
<dbReference type="eggNOG" id="KOG1076">
    <property type="taxonomic scope" value="Eukaryota"/>
</dbReference>
<dbReference type="GeneTree" id="ENSGT00390000017900"/>
<dbReference type="HOGENOM" id="CLU_004304_0_0_1"/>
<dbReference type="InParanoid" id="Q3SYW6"/>
<dbReference type="OMA" id="FRCGLIK"/>
<dbReference type="OrthoDB" id="29647at2759"/>
<dbReference type="TreeFam" id="TF101520"/>
<dbReference type="Reactome" id="R-BTA-156827">
    <property type="pathway name" value="L13a-mediated translational silencing of Ceruloplasmin expression"/>
</dbReference>
<dbReference type="Reactome" id="R-BTA-72649">
    <property type="pathway name" value="Translation initiation complex formation"/>
</dbReference>
<dbReference type="Reactome" id="R-BTA-72689">
    <property type="pathway name" value="Formation of a pool of free 40S subunits"/>
</dbReference>
<dbReference type="Reactome" id="R-BTA-72695">
    <property type="pathway name" value="Formation of the ternary complex, and subsequently, the 43S complex"/>
</dbReference>
<dbReference type="Reactome" id="R-BTA-72702">
    <property type="pathway name" value="Ribosomal scanning and start codon recognition"/>
</dbReference>
<dbReference type="Proteomes" id="UP000009136">
    <property type="component" value="Chromosome 25"/>
</dbReference>
<dbReference type="Bgee" id="ENSBTAG00000006543">
    <property type="expression patterns" value="Expressed in intramuscular adipose tissue and 110 other cell types or tissues"/>
</dbReference>
<dbReference type="GO" id="GO:0016282">
    <property type="term" value="C:eukaryotic 43S preinitiation complex"/>
    <property type="evidence" value="ECO:0007669"/>
    <property type="project" value="UniProtKB-UniRule"/>
</dbReference>
<dbReference type="GO" id="GO:0033290">
    <property type="term" value="C:eukaryotic 48S preinitiation complex"/>
    <property type="evidence" value="ECO:0007669"/>
    <property type="project" value="UniProtKB-UniRule"/>
</dbReference>
<dbReference type="GO" id="GO:0005852">
    <property type="term" value="C:eukaryotic translation initiation factor 3 complex"/>
    <property type="evidence" value="ECO:0000250"/>
    <property type="project" value="UniProtKB"/>
</dbReference>
<dbReference type="GO" id="GO:0071541">
    <property type="term" value="C:eukaryotic translation initiation factor 3 complex, eIF3m"/>
    <property type="evidence" value="ECO:0007669"/>
    <property type="project" value="Ensembl"/>
</dbReference>
<dbReference type="GO" id="GO:0003723">
    <property type="term" value="F:RNA binding"/>
    <property type="evidence" value="ECO:0007669"/>
    <property type="project" value="InterPro"/>
</dbReference>
<dbReference type="GO" id="GO:0003743">
    <property type="term" value="F:translation initiation factor activity"/>
    <property type="evidence" value="ECO:0007669"/>
    <property type="project" value="UniProtKB-UniRule"/>
</dbReference>
<dbReference type="GO" id="GO:0031369">
    <property type="term" value="F:translation initiation factor binding"/>
    <property type="evidence" value="ECO:0000318"/>
    <property type="project" value="GO_Central"/>
</dbReference>
<dbReference type="GO" id="GO:0001732">
    <property type="term" value="P:formation of cytoplasmic translation initiation complex"/>
    <property type="evidence" value="ECO:0007669"/>
    <property type="project" value="UniProtKB-UniRule"/>
</dbReference>
<dbReference type="GO" id="GO:0006413">
    <property type="term" value="P:translational initiation"/>
    <property type="evidence" value="ECO:0000250"/>
    <property type="project" value="UniProtKB"/>
</dbReference>
<dbReference type="FunFam" id="1.10.10.10:FF:000461">
    <property type="entry name" value="Eukaryotic translation initiation factor 3 subunit C"/>
    <property type="match status" value="1"/>
</dbReference>
<dbReference type="Gene3D" id="1.10.10.10">
    <property type="entry name" value="Winged helix-like DNA-binding domain superfamily/Winged helix DNA-binding domain"/>
    <property type="match status" value="1"/>
</dbReference>
<dbReference type="HAMAP" id="MF_03002">
    <property type="entry name" value="eIF3c"/>
    <property type="match status" value="1"/>
</dbReference>
<dbReference type="InterPro" id="IPR027516">
    <property type="entry name" value="EIF3C"/>
</dbReference>
<dbReference type="InterPro" id="IPR008905">
    <property type="entry name" value="EIF3C_N_dom"/>
</dbReference>
<dbReference type="InterPro" id="IPR000717">
    <property type="entry name" value="PCI_dom"/>
</dbReference>
<dbReference type="InterPro" id="IPR036388">
    <property type="entry name" value="WH-like_DNA-bd_sf"/>
</dbReference>
<dbReference type="InterPro" id="IPR036390">
    <property type="entry name" value="WH_DNA-bd_sf"/>
</dbReference>
<dbReference type="PANTHER" id="PTHR13937">
    <property type="entry name" value="EUKARYOTIC TRANSLATION INITATION FACTOR 3, SUBUNIT 8 EIF3S8 -RELATED"/>
    <property type="match status" value="1"/>
</dbReference>
<dbReference type="PANTHER" id="PTHR13937:SF0">
    <property type="entry name" value="EUKARYOTIC TRANSLATION INITIATION FACTOR 3 SUBUNIT C-RELATED"/>
    <property type="match status" value="1"/>
</dbReference>
<dbReference type="Pfam" id="PF05470">
    <property type="entry name" value="eIF-3c_N"/>
    <property type="match status" value="1"/>
</dbReference>
<dbReference type="Pfam" id="PF01399">
    <property type="entry name" value="PCI"/>
    <property type="match status" value="1"/>
</dbReference>
<dbReference type="SMART" id="SM00088">
    <property type="entry name" value="PINT"/>
    <property type="match status" value="1"/>
</dbReference>
<dbReference type="SUPFAM" id="SSF46785">
    <property type="entry name" value="Winged helix' DNA-binding domain"/>
    <property type="match status" value="1"/>
</dbReference>
<dbReference type="PROSITE" id="PS50250">
    <property type="entry name" value="PCI"/>
    <property type="match status" value="1"/>
</dbReference>
<evidence type="ECO:0000250" key="1">
    <source>
        <dbReference type="UniProtKB" id="Q8R1B4"/>
    </source>
</evidence>
<evidence type="ECO:0000250" key="2">
    <source>
        <dbReference type="UniProtKB" id="Q99613"/>
    </source>
</evidence>
<evidence type="ECO:0000255" key="3">
    <source>
        <dbReference type="HAMAP-Rule" id="MF_03002"/>
    </source>
</evidence>
<evidence type="ECO:0000255" key="4">
    <source>
        <dbReference type="PROSITE-ProRule" id="PRU01185"/>
    </source>
</evidence>
<evidence type="ECO:0000256" key="5">
    <source>
        <dbReference type="SAM" id="MobiDB-lite"/>
    </source>
</evidence>
<organism>
    <name type="scientific">Bos taurus</name>
    <name type="common">Bovine</name>
    <dbReference type="NCBI Taxonomy" id="9913"/>
    <lineage>
        <taxon>Eukaryota</taxon>
        <taxon>Metazoa</taxon>
        <taxon>Chordata</taxon>
        <taxon>Craniata</taxon>
        <taxon>Vertebrata</taxon>
        <taxon>Euteleostomi</taxon>
        <taxon>Mammalia</taxon>
        <taxon>Eutheria</taxon>
        <taxon>Laurasiatheria</taxon>
        <taxon>Artiodactyla</taxon>
        <taxon>Ruminantia</taxon>
        <taxon>Pecora</taxon>
        <taxon>Bovidae</taxon>
        <taxon>Bovinae</taxon>
        <taxon>Bos</taxon>
    </lineage>
</organism>
<proteinExistence type="evidence at transcript level"/>
<protein>
    <recommendedName>
        <fullName evidence="3">Eukaryotic translation initiation factor 3 subunit C</fullName>
        <shortName evidence="3">eIF3c</shortName>
    </recommendedName>
    <alternativeName>
        <fullName evidence="3">Eukaryotic translation initiation factor 3 subunit 8</fullName>
    </alternativeName>
    <alternativeName>
        <fullName evidence="3">eIF3 p110</fullName>
    </alternativeName>
</protein>